<keyword id="KW-0472">Membrane</keyword>
<keyword id="KW-1185">Reference proteome</keyword>
<keyword id="KW-0812">Transmembrane</keyword>
<keyword id="KW-1133">Transmembrane helix</keyword>
<proteinExistence type="predicted"/>
<protein>
    <recommendedName>
        <fullName>Uncharacterized protein HI_0134</fullName>
    </recommendedName>
</protein>
<sequence length="391" mass="44575">MKKFALIVGIVALAIFSFLYIQLYRVQSAINEQLAQQNIAVQSINLSLFSPALSLENIKTTQFSAQKIEAKFSFLPLLYGNAALHSLNIQQLKLTQNTQNPANVSIEISPFSLKQLLSKKVILNGENHIRIEFNKPIYGKTKTFHFSFHKANLDFSTSESTPLQFVDASLNNQPIGYIETHTAHQQIVTYIKPQCDNDCLAVLKYQQIDNQSAVNFSGKYFPVQRLFALLNLPEMLSGHADFDLDFSFSSSSLIQGKLNFLAQNGEILGVNLLDMVAQYFPINYNNDLLQNKELNTRFEQFYLQLFLQQNQLIAEKIELKTPALLGQGKGIIDLNRMECNVDINLNSTDQRYQNLTLPINFFGNCNSPQYKINFTKKFRHQLIDAIKEKLR</sequence>
<accession>P43952</accession>
<evidence type="ECO:0000255" key="1"/>
<evidence type="ECO:0000305" key="2"/>
<gene>
    <name type="ordered locus">HI_0134</name>
</gene>
<name>Y134_HAEIN</name>
<reference key="1">
    <citation type="journal article" date="1995" name="Science">
        <title>Whole-genome random sequencing and assembly of Haemophilus influenzae Rd.</title>
        <authorList>
            <person name="Fleischmann R.D."/>
            <person name="Adams M.D."/>
            <person name="White O."/>
            <person name="Clayton R.A."/>
            <person name="Kirkness E.F."/>
            <person name="Kerlavage A.R."/>
            <person name="Bult C.J."/>
            <person name="Tomb J.-F."/>
            <person name="Dougherty B.A."/>
            <person name="Merrick J.M."/>
            <person name="McKenney K."/>
            <person name="Sutton G.G."/>
            <person name="FitzHugh W."/>
            <person name="Fields C.A."/>
            <person name="Gocayne J.D."/>
            <person name="Scott J.D."/>
            <person name="Shirley R."/>
            <person name="Liu L.-I."/>
            <person name="Glodek A."/>
            <person name="Kelley J.M."/>
            <person name="Weidman J.F."/>
            <person name="Phillips C.A."/>
            <person name="Spriggs T."/>
            <person name="Hedblom E."/>
            <person name="Cotton M.D."/>
            <person name="Utterback T.R."/>
            <person name="Hanna M.C."/>
            <person name="Nguyen D.T."/>
            <person name="Saudek D.M."/>
            <person name="Brandon R.C."/>
            <person name="Fine L.D."/>
            <person name="Fritchman J.L."/>
            <person name="Fuhrmann J.L."/>
            <person name="Geoghagen N.S.M."/>
            <person name="Gnehm C.L."/>
            <person name="McDonald L.A."/>
            <person name="Small K.V."/>
            <person name="Fraser C.M."/>
            <person name="Smith H.O."/>
            <person name="Venter J.C."/>
        </authorList>
    </citation>
    <scope>NUCLEOTIDE SEQUENCE [LARGE SCALE GENOMIC DNA]</scope>
    <source>
        <strain>ATCC 51907 / DSM 11121 / KW20 / Rd</strain>
    </source>
</reference>
<organism>
    <name type="scientific">Haemophilus influenzae (strain ATCC 51907 / DSM 11121 / KW20 / Rd)</name>
    <dbReference type="NCBI Taxonomy" id="71421"/>
    <lineage>
        <taxon>Bacteria</taxon>
        <taxon>Pseudomonadati</taxon>
        <taxon>Pseudomonadota</taxon>
        <taxon>Gammaproteobacteria</taxon>
        <taxon>Pasteurellales</taxon>
        <taxon>Pasteurellaceae</taxon>
        <taxon>Haemophilus</taxon>
    </lineage>
</organism>
<comment type="subcellular location">
    <subcellularLocation>
        <location evidence="2">Membrane</location>
        <topology evidence="2">Single-pass membrane protein</topology>
    </subcellularLocation>
</comment>
<feature type="chain" id="PRO_0000077893" description="Uncharacterized protein HI_0134">
    <location>
        <begin position="1"/>
        <end position="391"/>
    </location>
</feature>
<feature type="transmembrane region" description="Helical" evidence="1">
    <location>
        <begin position="4"/>
        <end position="24"/>
    </location>
</feature>
<dbReference type="EMBL" id="L42023">
    <property type="protein sequence ID" value="AAC21811.1"/>
    <property type="molecule type" value="Genomic_DNA"/>
</dbReference>
<dbReference type="PIR" id="F64002">
    <property type="entry name" value="F64002"/>
</dbReference>
<dbReference type="RefSeq" id="NP_438303.1">
    <property type="nucleotide sequence ID" value="NC_000907.1"/>
</dbReference>
<dbReference type="SMR" id="P43952"/>
<dbReference type="STRING" id="71421.HI_0134"/>
<dbReference type="EnsemblBacteria" id="AAC21811">
    <property type="protein sequence ID" value="AAC21811"/>
    <property type="gene ID" value="HI_0134"/>
</dbReference>
<dbReference type="KEGG" id="hin:HI_0134"/>
<dbReference type="PATRIC" id="fig|71421.8.peg.136"/>
<dbReference type="eggNOG" id="ENOG5031JZV">
    <property type="taxonomic scope" value="Bacteria"/>
</dbReference>
<dbReference type="HOGENOM" id="CLU_681241_0_0_6"/>
<dbReference type="OrthoDB" id="5689712at2"/>
<dbReference type="BioCyc" id="HINF71421:G1GJ1-144-MONOMER"/>
<dbReference type="Proteomes" id="UP000000579">
    <property type="component" value="Chromosome"/>
</dbReference>
<dbReference type="GO" id="GO:0016020">
    <property type="term" value="C:membrane"/>
    <property type="evidence" value="ECO:0007669"/>
    <property type="project" value="UniProtKB-SubCell"/>
</dbReference>
<dbReference type="InterPro" id="IPR052894">
    <property type="entry name" value="AsmA-related"/>
</dbReference>
<dbReference type="PANTHER" id="PTHR30441">
    <property type="entry name" value="DUF748 DOMAIN-CONTAINING PROTEIN"/>
    <property type="match status" value="1"/>
</dbReference>
<dbReference type="PANTHER" id="PTHR30441:SF8">
    <property type="entry name" value="DUF748 DOMAIN-CONTAINING PROTEIN"/>
    <property type="match status" value="1"/>
</dbReference>